<accession>B2VEQ6</accession>
<feature type="chain" id="PRO_1000125854" description="Ion-translocating oxidoreductase complex subunit E">
    <location>
        <begin position="1"/>
        <end position="233"/>
    </location>
</feature>
<feature type="transmembrane region" description="Helical" evidence="1">
    <location>
        <begin position="22"/>
        <end position="42"/>
    </location>
</feature>
<feature type="transmembrane region" description="Helical" evidence="1">
    <location>
        <begin position="69"/>
        <end position="89"/>
    </location>
</feature>
<feature type="transmembrane region" description="Helical" evidence="1">
    <location>
        <begin position="93"/>
        <end position="113"/>
    </location>
</feature>
<feature type="transmembrane region" description="Helical" evidence="1">
    <location>
        <begin position="128"/>
        <end position="148"/>
    </location>
</feature>
<feature type="transmembrane region" description="Helical" evidence="1">
    <location>
        <begin position="182"/>
        <end position="202"/>
    </location>
</feature>
<name>RNFE_ERWT9</name>
<comment type="function">
    <text evidence="1">Part of a membrane-bound complex that couples electron transfer with translocation of ions across the membrane.</text>
</comment>
<comment type="subunit">
    <text evidence="1">The complex is composed of six subunits: RnfA, RnfB, RnfC, RnfD, RnfE and RnfG.</text>
</comment>
<comment type="subcellular location">
    <subcellularLocation>
        <location evidence="1">Cell inner membrane</location>
        <topology evidence="1">Multi-pass membrane protein</topology>
    </subcellularLocation>
</comment>
<comment type="similarity">
    <text evidence="1">Belongs to the NqrDE/RnfAE family.</text>
</comment>
<proteinExistence type="inferred from homology"/>
<sequence length="233" mass="24347">MSEAKTLLVGGLWKNNSALVQLLGLCPLLAVTSTATNALGLGLATTLVLTCTNSAISLSRRWVPAEIRIPIYVMIIAAVVSCVQMLINAYAYGLYQSLGIFIPLIVTNCIVVGRAEAVASKSSVPLSALDGMAIGLGATSVMVVLGSIREIIGNGTIFNGADQLLGPWAKAMHIQVVHFDSPMLLAMLPPGAFIGLGMLLAAKYLIDNKMKQRATLKAESQAQGLPEGKTGAL</sequence>
<gene>
    <name evidence="1" type="primary">rnfE</name>
    <name type="ordered locus">ETA_17790</name>
</gene>
<evidence type="ECO:0000255" key="1">
    <source>
        <dbReference type="HAMAP-Rule" id="MF_00478"/>
    </source>
</evidence>
<protein>
    <recommendedName>
        <fullName evidence="1">Ion-translocating oxidoreductase complex subunit E</fullName>
        <ecNumber evidence="1">7.-.-.-</ecNumber>
    </recommendedName>
    <alternativeName>
        <fullName evidence="1">Rnf electron transport complex subunit E</fullName>
    </alternativeName>
</protein>
<keyword id="KW-0997">Cell inner membrane</keyword>
<keyword id="KW-1003">Cell membrane</keyword>
<keyword id="KW-0249">Electron transport</keyword>
<keyword id="KW-0472">Membrane</keyword>
<keyword id="KW-1185">Reference proteome</keyword>
<keyword id="KW-1278">Translocase</keyword>
<keyword id="KW-0812">Transmembrane</keyword>
<keyword id="KW-1133">Transmembrane helix</keyword>
<keyword id="KW-0813">Transport</keyword>
<organism>
    <name type="scientific">Erwinia tasmaniensis (strain DSM 17950 / CFBP 7177 / CIP 109463 / NCPPB 4357 / Et1/99)</name>
    <dbReference type="NCBI Taxonomy" id="465817"/>
    <lineage>
        <taxon>Bacteria</taxon>
        <taxon>Pseudomonadati</taxon>
        <taxon>Pseudomonadota</taxon>
        <taxon>Gammaproteobacteria</taxon>
        <taxon>Enterobacterales</taxon>
        <taxon>Erwiniaceae</taxon>
        <taxon>Erwinia</taxon>
    </lineage>
</organism>
<dbReference type="EC" id="7.-.-.-" evidence="1"/>
<dbReference type="EMBL" id="CU468135">
    <property type="protein sequence ID" value="CAO96825.1"/>
    <property type="molecule type" value="Genomic_DNA"/>
</dbReference>
<dbReference type="RefSeq" id="WP_012441514.1">
    <property type="nucleotide sequence ID" value="NC_010694.1"/>
</dbReference>
<dbReference type="SMR" id="B2VEQ6"/>
<dbReference type="STRING" id="465817.ETA_17790"/>
<dbReference type="KEGG" id="eta:ETA_17790"/>
<dbReference type="eggNOG" id="COG4660">
    <property type="taxonomic scope" value="Bacteria"/>
</dbReference>
<dbReference type="HOGENOM" id="CLU_046659_1_0_6"/>
<dbReference type="OrthoDB" id="9782945at2"/>
<dbReference type="Proteomes" id="UP000001726">
    <property type="component" value="Chromosome"/>
</dbReference>
<dbReference type="GO" id="GO:0005886">
    <property type="term" value="C:plasma membrane"/>
    <property type="evidence" value="ECO:0007669"/>
    <property type="project" value="UniProtKB-SubCell"/>
</dbReference>
<dbReference type="GO" id="GO:0022900">
    <property type="term" value="P:electron transport chain"/>
    <property type="evidence" value="ECO:0007669"/>
    <property type="project" value="UniProtKB-UniRule"/>
</dbReference>
<dbReference type="HAMAP" id="MF_00478">
    <property type="entry name" value="RsxE_RnfE"/>
    <property type="match status" value="1"/>
</dbReference>
<dbReference type="InterPro" id="IPR003667">
    <property type="entry name" value="NqrDE/RnfAE"/>
</dbReference>
<dbReference type="InterPro" id="IPR010968">
    <property type="entry name" value="RnfE"/>
</dbReference>
<dbReference type="NCBIfam" id="NF009070">
    <property type="entry name" value="PRK12405.1"/>
    <property type="match status" value="1"/>
</dbReference>
<dbReference type="NCBIfam" id="TIGR01948">
    <property type="entry name" value="rnfE"/>
    <property type="match status" value="1"/>
</dbReference>
<dbReference type="PANTHER" id="PTHR30586">
    <property type="entry name" value="ELECTRON TRANSPORT COMPLEX PROTEIN RNFE"/>
    <property type="match status" value="1"/>
</dbReference>
<dbReference type="PANTHER" id="PTHR30586:SF0">
    <property type="entry name" value="ION-TRANSLOCATING OXIDOREDUCTASE COMPLEX SUBUNIT E"/>
    <property type="match status" value="1"/>
</dbReference>
<dbReference type="Pfam" id="PF02508">
    <property type="entry name" value="Rnf-Nqr"/>
    <property type="match status" value="1"/>
</dbReference>
<dbReference type="PIRSF" id="PIRSF006102">
    <property type="entry name" value="NQR_DE"/>
    <property type="match status" value="1"/>
</dbReference>
<reference key="1">
    <citation type="journal article" date="2008" name="Environ. Microbiol.">
        <title>The genome of Erwinia tasmaniensis strain Et1/99, a non-pathogenic bacterium in the genus Erwinia.</title>
        <authorList>
            <person name="Kube M."/>
            <person name="Migdoll A.M."/>
            <person name="Mueller I."/>
            <person name="Kuhl H."/>
            <person name="Beck A."/>
            <person name="Reinhardt R."/>
            <person name="Geider K."/>
        </authorList>
    </citation>
    <scope>NUCLEOTIDE SEQUENCE [LARGE SCALE GENOMIC DNA]</scope>
    <source>
        <strain>DSM 17950 / CFBP 7177 / CIP 109463 / NCPPB 4357 / Et1/99</strain>
    </source>
</reference>